<organism>
    <name type="scientific">Mus musculus</name>
    <name type="common">Mouse</name>
    <dbReference type="NCBI Taxonomy" id="10090"/>
    <lineage>
        <taxon>Eukaryota</taxon>
        <taxon>Metazoa</taxon>
        <taxon>Chordata</taxon>
        <taxon>Craniata</taxon>
        <taxon>Vertebrata</taxon>
        <taxon>Euteleostomi</taxon>
        <taxon>Mammalia</taxon>
        <taxon>Eutheria</taxon>
        <taxon>Euarchontoglires</taxon>
        <taxon>Glires</taxon>
        <taxon>Rodentia</taxon>
        <taxon>Myomorpha</taxon>
        <taxon>Muroidea</taxon>
        <taxon>Muridae</taxon>
        <taxon>Murinae</taxon>
        <taxon>Mus</taxon>
        <taxon>Mus</taxon>
    </lineage>
</organism>
<sequence length="466" mass="50446">MTMLLDGGPQFPGLGVGSFGAPRHHEMPNREPAGMGLNPFGDSTHAAAAAAAAAAFKLSPATAHDLSSGQSSAFTPQGSGYANALGHHHHHHHHHHASQVPTYGGAASAAFNSTRDFLFRQRGSGLSEAASGGGQHGLFAGSASSLHAPAGIPEPPSYLLFPGLHEQGAGHPSPTGHVDNNQVHLGLRGELFGRADPYRPVASPRTDPYAASAQFPNYSPMNMNMGVNVAAHHGPGAFFRYMRQPIKQELSCKWIEEAQLSRPKKSCDRTFSTMHELVTHVTMEHVGGPEQNNHVCYWEECPREGKSFKAKYKLVNHIRVHTGEKPFPCPFPGCGKIFARSENLKIHKRTHTGEKPFKCEFEGCDRRFANSSDRKKHMHVHTSDKPYICKVCDKSYTHPSSLRKHMKVHESQGSDSSPAASSGYESSTPPAIASANSKDTTKTPSAVQTSTSHNPGLPPNFNEWYV</sequence>
<proteinExistence type="evidence at protein level"/>
<reference key="1">
    <citation type="journal article" date="1996" name="J. Biol. Chem.">
        <title>The mouse zic gene family. Homologues of the Drosophila pair-rule gene odd-paired.</title>
        <authorList>
            <person name="Aruga J."/>
            <person name="Nagai T."/>
            <person name="Tokuyama T."/>
            <person name="Hayashizaki Y."/>
            <person name="Okazaki Y."/>
            <person name="Chapman V.M."/>
            <person name="Mikoshiba K."/>
        </authorList>
    </citation>
    <scope>NUCLEOTIDE SEQUENCE [MRNA] (ISOFORM 1)</scope>
    <source>
        <tissue>Cerebellum</tissue>
    </source>
</reference>
<reference key="2">
    <citation type="journal article" date="2005" name="Science">
        <title>The transcriptional landscape of the mammalian genome.</title>
        <authorList>
            <person name="Carninci P."/>
            <person name="Kasukawa T."/>
            <person name="Katayama S."/>
            <person name="Gough J."/>
            <person name="Frith M.C."/>
            <person name="Maeda N."/>
            <person name="Oyama R."/>
            <person name="Ravasi T."/>
            <person name="Lenhard B."/>
            <person name="Wells C."/>
            <person name="Kodzius R."/>
            <person name="Shimokawa K."/>
            <person name="Bajic V.B."/>
            <person name="Brenner S.E."/>
            <person name="Batalov S."/>
            <person name="Forrest A.R."/>
            <person name="Zavolan M."/>
            <person name="Davis M.J."/>
            <person name="Wilming L.G."/>
            <person name="Aidinis V."/>
            <person name="Allen J.E."/>
            <person name="Ambesi-Impiombato A."/>
            <person name="Apweiler R."/>
            <person name="Aturaliya R.N."/>
            <person name="Bailey T.L."/>
            <person name="Bansal M."/>
            <person name="Baxter L."/>
            <person name="Beisel K.W."/>
            <person name="Bersano T."/>
            <person name="Bono H."/>
            <person name="Chalk A.M."/>
            <person name="Chiu K.P."/>
            <person name="Choudhary V."/>
            <person name="Christoffels A."/>
            <person name="Clutterbuck D.R."/>
            <person name="Crowe M.L."/>
            <person name="Dalla E."/>
            <person name="Dalrymple B.P."/>
            <person name="de Bono B."/>
            <person name="Della Gatta G."/>
            <person name="di Bernardo D."/>
            <person name="Down T."/>
            <person name="Engstrom P."/>
            <person name="Fagiolini M."/>
            <person name="Faulkner G."/>
            <person name="Fletcher C.F."/>
            <person name="Fukushima T."/>
            <person name="Furuno M."/>
            <person name="Futaki S."/>
            <person name="Gariboldi M."/>
            <person name="Georgii-Hemming P."/>
            <person name="Gingeras T.R."/>
            <person name="Gojobori T."/>
            <person name="Green R.E."/>
            <person name="Gustincich S."/>
            <person name="Harbers M."/>
            <person name="Hayashi Y."/>
            <person name="Hensch T.K."/>
            <person name="Hirokawa N."/>
            <person name="Hill D."/>
            <person name="Huminiecki L."/>
            <person name="Iacono M."/>
            <person name="Ikeo K."/>
            <person name="Iwama A."/>
            <person name="Ishikawa T."/>
            <person name="Jakt M."/>
            <person name="Kanapin A."/>
            <person name="Katoh M."/>
            <person name="Kawasawa Y."/>
            <person name="Kelso J."/>
            <person name="Kitamura H."/>
            <person name="Kitano H."/>
            <person name="Kollias G."/>
            <person name="Krishnan S.P."/>
            <person name="Kruger A."/>
            <person name="Kummerfeld S.K."/>
            <person name="Kurochkin I.V."/>
            <person name="Lareau L.F."/>
            <person name="Lazarevic D."/>
            <person name="Lipovich L."/>
            <person name="Liu J."/>
            <person name="Liuni S."/>
            <person name="McWilliam S."/>
            <person name="Madan Babu M."/>
            <person name="Madera M."/>
            <person name="Marchionni L."/>
            <person name="Matsuda H."/>
            <person name="Matsuzawa S."/>
            <person name="Miki H."/>
            <person name="Mignone F."/>
            <person name="Miyake S."/>
            <person name="Morris K."/>
            <person name="Mottagui-Tabar S."/>
            <person name="Mulder N."/>
            <person name="Nakano N."/>
            <person name="Nakauchi H."/>
            <person name="Ng P."/>
            <person name="Nilsson R."/>
            <person name="Nishiguchi S."/>
            <person name="Nishikawa S."/>
            <person name="Nori F."/>
            <person name="Ohara O."/>
            <person name="Okazaki Y."/>
            <person name="Orlando V."/>
            <person name="Pang K.C."/>
            <person name="Pavan W.J."/>
            <person name="Pavesi G."/>
            <person name="Pesole G."/>
            <person name="Petrovsky N."/>
            <person name="Piazza S."/>
            <person name="Reed J."/>
            <person name="Reid J.F."/>
            <person name="Ring B.Z."/>
            <person name="Ringwald M."/>
            <person name="Rost B."/>
            <person name="Ruan Y."/>
            <person name="Salzberg S.L."/>
            <person name="Sandelin A."/>
            <person name="Schneider C."/>
            <person name="Schoenbach C."/>
            <person name="Sekiguchi K."/>
            <person name="Semple C.A."/>
            <person name="Seno S."/>
            <person name="Sessa L."/>
            <person name="Sheng Y."/>
            <person name="Shibata Y."/>
            <person name="Shimada H."/>
            <person name="Shimada K."/>
            <person name="Silva D."/>
            <person name="Sinclair B."/>
            <person name="Sperling S."/>
            <person name="Stupka E."/>
            <person name="Sugiura K."/>
            <person name="Sultana R."/>
            <person name="Takenaka Y."/>
            <person name="Taki K."/>
            <person name="Tammoja K."/>
            <person name="Tan S.L."/>
            <person name="Tang S."/>
            <person name="Taylor M.S."/>
            <person name="Tegner J."/>
            <person name="Teichmann S.A."/>
            <person name="Ueda H.R."/>
            <person name="van Nimwegen E."/>
            <person name="Verardo R."/>
            <person name="Wei C.L."/>
            <person name="Yagi K."/>
            <person name="Yamanishi H."/>
            <person name="Zabarovsky E."/>
            <person name="Zhu S."/>
            <person name="Zimmer A."/>
            <person name="Hide W."/>
            <person name="Bult C."/>
            <person name="Grimmond S.M."/>
            <person name="Teasdale R.D."/>
            <person name="Liu E.T."/>
            <person name="Brusic V."/>
            <person name="Quackenbush J."/>
            <person name="Wahlestedt C."/>
            <person name="Mattick J.S."/>
            <person name="Hume D.A."/>
            <person name="Kai C."/>
            <person name="Sasaki D."/>
            <person name="Tomaru Y."/>
            <person name="Fukuda S."/>
            <person name="Kanamori-Katayama M."/>
            <person name="Suzuki M."/>
            <person name="Aoki J."/>
            <person name="Arakawa T."/>
            <person name="Iida J."/>
            <person name="Imamura K."/>
            <person name="Itoh M."/>
            <person name="Kato T."/>
            <person name="Kawaji H."/>
            <person name="Kawagashira N."/>
            <person name="Kawashima T."/>
            <person name="Kojima M."/>
            <person name="Kondo S."/>
            <person name="Konno H."/>
            <person name="Nakano K."/>
            <person name="Ninomiya N."/>
            <person name="Nishio T."/>
            <person name="Okada M."/>
            <person name="Plessy C."/>
            <person name="Shibata K."/>
            <person name="Shiraki T."/>
            <person name="Suzuki S."/>
            <person name="Tagami M."/>
            <person name="Waki K."/>
            <person name="Watahiki A."/>
            <person name="Okamura-Oho Y."/>
            <person name="Suzuki H."/>
            <person name="Kawai J."/>
            <person name="Hayashizaki Y."/>
        </authorList>
    </citation>
    <scope>NUCLEOTIDE SEQUENCE [LARGE SCALE MRNA] (ISOFORMS 1 AND 2)</scope>
    <source>
        <strain>C57BL/6J</strain>
        <tissue>Embryo</tissue>
        <tissue>Testis</tissue>
    </source>
</reference>
<reference key="3">
    <citation type="journal article" date="2009" name="PLoS Biol.">
        <title>Lineage-specific biology revealed by a finished genome assembly of the mouse.</title>
        <authorList>
            <person name="Church D.M."/>
            <person name="Goodstadt L."/>
            <person name="Hillier L.W."/>
            <person name="Zody M.C."/>
            <person name="Goldstein S."/>
            <person name="She X."/>
            <person name="Bult C.J."/>
            <person name="Agarwala R."/>
            <person name="Cherry J.L."/>
            <person name="DiCuccio M."/>
            <person name="Hlavina W."/>
            <person name="Kapustin Y."/>
            <person name="Meric P."/>
            <person name="Maglott D."/>
            <person name="Birtle Z."/>
            <person name="Marques A.C."/>
            <person name="Graves T."/>
            <person name="Zhou S."/>
            <person name="Teague B."/>
            <person name="Potamousis K."/>
            <person name="Churas C."/>
            <person name="Place M."/>
            <person name="Herschleb J."/>
            <person name="Runnheim R."/>
            <person name="Forrest D."/>
            <person name="Amos-Landgraf J."/>
            <person name="Schwartz D.C."/>
            <person name="Cheng Z."/>
            <person name="Lindblad-Toh K."/>
            <person name="Eichler E.E."/>
            <person name="Ponting C.P."/>
        </authorList>
    </citation>
    <scope>NUCLEOTIDE SEQUENCE [LARGE SCALE GENOMIC DNA]</scope>
    <source>
        <strain>C57BL/6J</strain>
    </source>
</reference>
<reference key="4">
    <citation type="submission" date="2005-07" db="EMBL/GenBank/DDBJ databases">
        <authorList>
            <person name="Mural R.J."/>
            <person name="Adams M.D."/>
            <person name="Myers E.W."/>
            <person name="Smith H.O."/>
            <person name="Venter J.C."/>
        </authorList>
    </citation>
    <scope>NUCLEOTIDE SEQUENCE [LARGE SCALE GENOMIC DNA]</scope>
</reference>
<reference key="5">
    <citation type="journal article" date="2001" name="J. Biol. Chem.">
        <title>Molecular properties of Zic proteins as transcriptional regulators and their relationship to GLI proteins.</title>
        <authorList>
            <person name="Mizugishi K."/>
            <person name="Aruga J."/>
            <person name="Nakata K."/>
            <person name="Mikoshiba K."/>
        </authorList>
    </citation>
    <scope>FUNCTION</scope>
    <scope>DNA-BINDING</scope>
</reference>
<reference key="6">
    <citation type="journal article" date="2001" name="J. Biol. Chem.">
        <title>Physical and functional interactions between Zic and Gli proteins.</title>
        <authorList>
            <person name="Koyabu Y."/>
            <person name="Nakata K."/>
            <person name="Mizugishi K."/>
            <person name="Aruga J."/>
            <person name="Mikoshiba K."/>
        </authorList>
    </citation>
    <scope>SUBCELLULAR LOCATION</scope>
</reference>
<reference key="7">
    <citation type="journal article" date="2002" name="Development">
        <title>A complex syndrome of left-right axis, central nervous system and axial skeleton defects in Zic3 mutant mice.</title>
        <authorList>
            <person name="Purandare S.M."/>
            <person name="Ware S.M."/>
            <person name="Kwan K.M."/>
            <person name="Gebbia M."/>
            <person name="Bassi M.T."/>
            <person name="Deng J.M."/>
            <person name="Vogel H."/>
            <person name="Behringer R.R."/>
            <person name="Belmont J.W."/>
            <person name="Casey B."/>
        </authorList>
    </citation>
    <scope>FUNCTION</scope>
    <scope>DISRUPTION PHENOTYPE</scope>
    <scope>DEVELOPMENTAL STAGE</scope>
</reference>
<reference key="8">
    <citation type="journal article" date="2004" name="Biochem. Biophys. Res. Commun.">
        <title>Myogenic repressor I-mfa interferes with the function of Zic family proteins.</title>
        <authorList>
            <person name="Mizugishi K."/>
            <person name="Hatayama M."/>
            <person name="Tohmonda T."/>
            <person name="Ogawa M."/>
            <person name="Inoue T."/>
            <person name="Mikoshiba K."/>
            <person name="Aruga J."/>
        </authorList>
    </citation>
    <scope>FUNCTION</scope>
    <scope>INTERACTION WITH MDFIC</scope>
</reference>
<reference key="9">
    <citation type="journal article" date="2011" name="PLoS ONE">
        <title>Identification of a novel ZIC3 isoform and mutation screening in patients with heterotaxy and congenital heart disease.</title>
        <authorList>
            <person name="Bedard J.E."/>
            <person name="Haaning A.M."/>
            <person name="Ware S.M."/>
        </authorList>
    </citation>
    <scope>ALTERNATIVE SPLICING</scope>
</reference>
<name>ZIC3_MOUSE</name>
<comment type="function">
    <text evidence="5 7 8">Acts as a transcriptional activator. Required in the earliest stages in both axial midline development and left-right (LR) asymmetry specification. Binds to the minimal GLI-consensus sequence 5'-GGGTGGTC-3'.</text>
</comment>
<comment type="subunit">
    <text evidence="1 8">Interacts with KPNA1 and KPNA6. Interacts (via C2H2-type domains 3, 4 and 5) with GLI3; the interaction enhances its transcriptional activity (By similarity). Interacts (via the C2H2-type domains 3, 4 and 5) with MDFIC (via the C2H2-type domains 3, 4 and 5); the interaction reduces its transcriptional activity.</text>
</comment>
<comment type="subcellular location">
    <subcellularLocation>
        <location evidence="6">Nucleus</location>
    </subcellularLocation>
    <subcellularLocation>
        <location evidence="6">Cytoplasm</location>
    </subcellularLocation>
    <text evidence="1">Translocation to the nucleus requires KPNA1 or KPNA6 (By similarity). Localizes in the cytoplasm in presence of MDFIC overexpression.</text>
</comment>
<comment type="alternative products">
    <event type="alternative splicing"/>
    <isoform>
        <id>Q62521-1</id>
        <name>1</name>
        <name>Zic3-A</name>
        <sequence type="displayed"/>
    </isoform>
    <isoform>
        <id>Q62521-2</id>
        <name>2</name>
        <name>Zic3-B</name>
        <sequence type="described" ref="VSP_044011"/>
    </isoform>
</comment>
<comment type="tissue specificity">
    <text>CNS. A high level expression is seen in the cerebellum.</text>
</comment>
<comment type="developmental stage">
    <text evidence="7">Expressed in the CNS, tailbud and somites.</text>
</comment>
<comment type="domain">
    <text>The C2H2-type 3, 4 and 5 zinc finger domains are necessary for transcription activation.</text>
</comment>
<comment type="disruption phenotype">
    <text evidence="7">Some mice exhibit embryonic and postnatal lethality. Viable mice show heart disease, disturbances of laterality, neural tube defects and vertebral and rib defects.</text>
</comment>
<comment type="similarity">
    <text evidence="10">Belongs to the GLI C2H2-type zinc-finger protein family.</text>
</comment>
<keyword id="KW-0010">Activator</keyword>
<keyword id="KW-0025">Alternative splicing</keyword>
<keyword id="KW-0963">Cytoplasm</keyword>
<keyword id="KW-0217">Developmental protein</keyword>
<keyword id="KW-0221">Differentiation</keyword>
<keyword id="KW-0238">DNA-binding</keyword>
<keyword id="KW-1017">Isopeptide bond</keyword>
<keyword id="KW-0479">Metal-binding</keyword>
<keyword id="KW-0524">Neurogenesis</keyword>
<keyword id="KW-0539">Nucleus</keyword>
<keyword id="KW-1185">Reference proteome</keyword>
<keyword id="KW-0677">Repeat</keyword>
<keyword id="KW-0804">Transcription</keyword>
<keyword id="KW-0805">Transcription regulation</keyword>
<keyword id="KW-0832">Ubl conjugation</keyword>
<keyword id="KW-0862">Zinc</keyword>
<keyword id="KW-0863">Zinc-finger</keyword>
<accession>Q62521</accession>
<accession>A2AWK3</accession>
<accession>Q3UYV1</accession>
<accession>Q8BSB3</accession>
<protein>
    <recommendedName>
        <fullName>Zinc finger protein ZIC 3</fullName>
    </recommendedName>
    <alternativeName>
        <fullName>Zinc finger protein of the cerebellum 3</fullName>
    </alternativeName>
</protein>
<evidence type="ECO:0000250" key="1"/>
<evidence type="ECO:0000250" key="2">
    <source>
        <dbReference type="UniProtKB" id="O60481"/>
    </source>
</evidence>
<evidence type="ECO:0000255" key="3">
    <source>
        <dbReference type="PROSITE-ProRule" id="PRU00042"/>
    </source>
</evidence>
<evidence type="ECO:0000256" key="4">
    <source>
        <dbReference type="SAM" id="MobiDB-lite"/>
    </source>
</evidence>
<evidence type="ECO:0000269" key="5">
    <source>
    </source>
</evidence>
<evidence type="ECO:0000269" key="6">
    <source>
    </source>
</evidence>
<evidence type="ECO:0000269" key="7">
    <source>
    </source>
</evidence>
<evidence type="ECO:0000269" key="8">
    <source>
    </source>
</evidence>
<evidence type="ECO:0000303" key="9">
    <source>
    </source>
</evidence>
<evidence type="ECO:0000305" key="10"/>
<feature type="chain" id="PRO_0000047251" description="Zinc finger protein ZIC 3">
    <location>
        <begin position="1"/>
        <end position="466"/>
    </location>
</feature>
<feature type="zinc finger region" description="C2H2-type 1; atypical" evidence="3">
    <location>
        <begin position="250"/>
        <end position="285"/>
    </location>
</feature>
<feature type="zinc finger region" description="C2H2-type 2; atypical" evidence="3">
    <location>
        <begin position="294"/>
        <end position="321"/>
    </location>
</feature>
<feature type="zinc finger region" description="C2H2-type 3" evidence="3">
    <location>
        <begin position="327"/>
        <end position="351"/>
    </location>
</feature>
<feature type="zinc finger region" description="C2H2-type 4" evidence="3">
    <location>
        <begin position="357"/>
        <end position="381"/>
    </location>
</feature>
<feature type="zinc finger region" description="C2H2-type 5" evidence="3">
    <location>
        <begin position="387"/>
        <end position="409"/>
    </location>
</feature>
<feature type="region of interest" description="Disordered" evidence="4">
    <location>
        <begin position="65"/>
        <end position="103"/>
    </location>
</feature>
<feature type="region of interest" description="Disordered" evidence="4">
    <location>
        <begin position="403"/>
        <end position="466"/>
    </location>
</feature>
<feature type="short sequence motif" description="Nuclear localization signal" evidence="1">
    <location>
        <begin position="296"/>
        <end position="321"/>
    </location>
</feature>
<feature type="short sequence motif" description="Nuclear localization signal" evidence="1">
    <location>
        <begin position="329"/>
        <end position="351"/>
    </location>
</feature>
<feature type="compositionally biased region" description="Polar residues" evidence="4">
    <location>
        <begin position="65"/>
        <end position="80"/>
    </location>
</feature>
<feature type="compositionally biased region" description="Basic residues" evidence="4">
    <location>
        <begin position="86"/>
        <end position="97"/>
    </location>
</feature>
<feature type="compositionally biased region" description="Low complexity" evidence="4">
    <location>
        <begin position="411"/>
        <end position="427"/>
    </location>
</feature>
<feature type="compositionally biased region" description="Polar residues" evidence="4">
    <location>
        <begin position="434"/>
        <end position="454"/>
    </location>
</feature>
<feature type="cross-link" description="Glycyl lysine isopeptide (Lys-Gly) (interchain with G-Cter in SUMO2)" evidence="2">
    <location>
        <position position="247"/>
    </location>
</feature>
<feature type="splice variant" id="VSP_044011" description="In isoform 2." evidence="9">
    <original>VHESQGSDSSPAASSGYESSTPPAIASANSKDTTKTPSAVQTSTSHNPGLPPNFNEWYV</original>
    <variation>CCPAWYLGQSLIPDEELDTDVGMQQPVLHNTSYPKCRVNAEPTVQEMIY</variation>
    <location>
        <begin position="408"/>
        <end position="466"/>
    </location>
</feature>
<feature type="sequence conflict" description="In Ref. 1; BAA11116." evidence="10" ref="1">
    <original>GGA</original>
    <variation>ARR</variation>
    <location>
        <begin position="104"/>
        <end position="106"/>
    </location>
</feature>
<feature type="sequence conflict" description="In Ref. 2; BAC28831." evidence="10" ref="2">
    <original>I</original>
    <variation>V</variation>
    <location sequence="Q62521-2">
        <position position="419"/>
    </location>
</feature>
<dbReference type="EMBL" id="D70849">
    <property type="protein sequence ID" value="BAA11116.1"/>
    <property type="molecule type" value="mRNA"/>
</dbReference>
<dbReference type="EMBL" id="AK134355">
    <property type="protein sequence ID" value="BAE22110.1"/>
    <property type="molecule type" value="mRNA"/>
</dbReference>
<dbReference type="EMBL" id="AK034780">
    <property type="protein sequence ID" value="BAC28831.1"/>
    <property type="molecule type" value="mRNA"/>
</dbReference>
<dbReference type="EMBL" id="AL671920">
    <property type="status" value="NOT_ANNOTATED_CDS"/>
    <property type="molecule type" value="Genomic_DNA"/>
</dbReference>
<dbReference type="EMBL" id="AL954389">
    <property type="status" value="NOT_ANNOTATED_CDS"/>
    <property type="molecule type" value="Genomic_DNA"/>
</dbReference>
<dbReference type="EMBL" id="CH466583">
    <property type="protein sequence ID" value="EDL42177.1"/>
    <property type="molecule type" value="Genomic_DNA"/>
</dbReference>
<dbReference type="EMBL" id="CH466583">
    <property type="protein sequence ID" value="EDL42178.1"/>
    <property type="molecule type" value="Genomic_DNA"/>
</dbReference>
<dbReference type="CCDS" id="CCDS30155.1">
    <molecule id="Q62521-1"/>
</dbReference>
<dbReference type="RefSeq" id="NP_033601.2">
    <molecule id="Q62521-1"/>
    <property type="nucleotide sequence ID" value="NM_009575.2"/>
</dbReference>
<dbReference type="SMR" id="Q62521"/>
<dbReference type="BioGRID" id="204696">
    <property type="interactions" value="2"/>
</dbReference>
<dbReference type="FunCoup" id="Q62521">
    <property type="interactions" value="2163"/>
</dbReference>
<dbReference type="IntAct" id="Q62521">
    <property type="interactions" value="2"/>
</dbReference>
<dbReference type="MINT" id="Q62521"/>
<dbReference type="STRING" id="10090.ENSMUSP00000085999"/>
<dbReference type="GlyGen" id="Q62521">
    <property type="glycosylation" value="1 site, 1 O-linked glycan (1 site)"/>
</dbReference>
<dbReference type="iPTMnet" id="Q62521"/>
<dbReference type="PhosphoSitePlus" id="Q62521"/>
<dbReference type="PaxDb" id="10090-ENSMUSP00000085999"/>
<dbReference type="PeptideAtlas" id="Q62521"/>
<dbReference type="ProteomicsDB" id="299559">
    <molecule id="Q62521-1"/>
</dbReference>
<dbReference type="ProteomicsDB" id="299560">
    <molecule id="Q62521-2"/>
</dbReference>
<dbReference type="Antibodypedia" id="30470">
    <property type="antibodies" value="281 antibodies from 31 providers"/>
</dbReference>
<dbReference type="DNASU" id="22773"/>
<dbReference type="Ensembl" id="ENSMUST00000088627.11">
    <molecule id="Q62521-1"/>
    <property type="protein sequence ID" value="ENSMUSP00000085999.5"/>
    <property type="gene ID" value="ENSMUSG00000067860.12"/>
</dbReference>
<dbReference type="Ensembl" id="ENSMUST00000088629.4">
    <molecule id="Q62521-2"/>
    <property type="protein sequence ID" value="ENSMUSP00000086001.4"/>
    <property type="gene ID" value="ENSMUSG00000067860.12"/>
</dbReference>
<dbReference type="GeneID" id="22773"/>
<dbReference type="KEGG" id="mmu:22773"/>
<dbReference type="UCSC" id="uc009tho.1">
    <molecule id="Q62521-1"/>
    <property type="organism name" value="mouse"/>
</dbReference>
<dbReference type="UCSC" id="uc009thp.1">
    <molecule id="Q62521-2"/>
    <property type="organism name" value="mouse"/>
</dbReference>
<dbReference type="AGR" id="MGI:106676"/>
<dbReference type="CTD" id="7547"/>
<dbReference type="MGI" id="MGI:106676">
    <property type="gene designation" value="Zic3"/>
</dbReference>
<dbReference type="VEuPathDB" id="HostDB:ENSMUSG00000067860"/>
<dbReference type="eggNOG" id="KOG1721">
    <property type="taxonomic scope" value="Eukaryota"/>
</dbReference>
<dbReference type="GeneTree" id="ENSGT00940000160788"/>
<dbReference type="HOGENOM" id="CLU_002678_37_1_1"/>
<dbReference type="InParanoid" id="Q62521"/>
<dbReference type="OMA" id="GTPRHHD"/>
<dbReference type="OrthoDB" id="3214149at2759"/>
<dbReference type="PhylomeDB" id="Q62521"/>
<dbReference type="TreeFam" id="TF351425"/>
<dbReference type="BioGRID-ORCS" id="22773">
    <property type="hits" value="1 hit in 80 CRISPR screens"/>
</dbReference>
<dbReference type="ChiTaRS" id="Zic3">
    <property type="organism name" value="mouse"/>
</dbReference>
<dbReference type="PRO" id="PR:Q62521"/>
<dbReference type="Proteomes" id="UP000000589">
    <property type="component" value="Chromosome X"/>
</dbReference>
<dbReference type="RNAct" id="Q62521">
    <property type="molecule type" value="protein"/>
</dbReference>
<dbReference type="Bgee" id="ENSMUSG00000067860">
    <property type="expression patterns" value="Expressed in brain blood vessel and 143 other cell types or tissues"/>
</dbReference>
<dbReference type="ExpressionAtlas" id="Q62521">
    <property type="expression patterns" value="baseline and differential"/>
</dbReference>
<dbReference type="GO" id="GO:0005737">
    <property type="term" value="C:cytoplasm"/>
    <property type="evidence" value="ECO:0000314"/>
    <property type="project" value="UniProtKB"/>
</dbReference>
<dbReference type="GO" id="GO:0005654">
    <property type="term" value="C:nucleoplasm"/>
    <property type="evidence" value="ECO:0007669"/>
    <property type="project" value="Ensembl"/>
</dbReference>
<dbReference type="GO" id="GO:0005634">
    <property type="term" value="C:nucleus"/>
    <property type="evidence" value="ECO:0000314"/>
    <property type="project" value="UniProtKB"/>
</dbReference>
<dbReference type="GO" id="GO:0001228">
    <property type="term" value="F:DNA-binding transcription activator activity, RNA polymerase II-specific"/>
    <property type="evidence" value="ECO:0000314"/>
    <property type="project" value="NTNU_SB"/>
</dbReference>
<dbReference type="GO" id="GO:0003700">
    <property type="term" value="F:DNA-binding transcription factor activity"/>
    <property type="evidence" value="ECO:0000314"/>
    <property type="project" value="UniProtKB"/>
</dbReference>
<dbReference type="GO" id="GO:0000978">
    <property type="term" value="F:RNA polymerase II cis-regulatory region sequence-specific DNA binding"/>
    <property type="evidence" value="ECO:0000314"/>
    <property type="project" value="NTNU_SB"/>
</dbReference>
<dbReference type="GO" id="GO:0000977">
    <property type="term" value="F:RNA polymerase II transcription regulatory region sequence-specific DNA binding"/>
    <property type="evidence" value="ECO:0000314"/>
    <property type="project" value="MGI"/>
</dbReference>
<dbReference type="GO" id="GO:0043565">
    <property type="term" value="F:sequence-specific DNA binding"/>
    <property type="evidence" value="ECO:0000250"/>
    <property type="project" value="UniProtKB"/>
</dbReference>
<dbReference type="GO" id="GO:0003713">
    <property type="term" value="F:transcription coactivator activity"/>
    <property type="evidence" value="ECO:0000315"/>
    <property type="project" value="MGI"/>
</dbReference>
<dbReference type="GO" id="GO:0008270">
    <property type="term" value="F:zinc ion binding"/>
    <property type="evidence" value="ECO:0007669"/>
    <property type="project" value="UniProtKB-KW"/>
</dbReference>
<dbReference type="GO" id="GO:0009952">
    <property type="term" value="P:anterior/posterior pattern specification"/>
    <property type="evidence" value="ECO:0000316"/>
    <property type="project" value="MGI"/>
</dbReference>
<dbReference type="GO" id="GO:0003228">
    <property type="term" value="P:atrial cardiac muscle tissue development"/>
    <property type="evidence" value="ECO:0000315"/>
    <property type="project" value="MGI"/>
</dbReference>
<dbReference type="GO" id="GO:0048318">
    <property type="term" value="P:axial mesoderm development"/>
    <property type="evidence" value="ECO:0000316"/>
    <property type="project" value="MGI"/>
</dbReference>
<dbReference type="GO" id="GO:0035283">
    <property type="term" value="P:central nervous system segmentation"/>
    <property type="evidence" value="ECO:0000316"/>
    <property type="project" value="MGI"/>
</dbReference>
<dbReference type="GO" id="GO:1904888">
    <property type="term" value="P:cranial skeletal system development"/>
    <property type="evidence" value="ECO:0000315"/>
    <property type="project" value="MGI"/>
</dbReference>
<dbReference type="GO" id="GO:0071907">
    <property type="term" value="P:determination of digestive tract left/right asymmetry"/>
    <property type="evidence" value="ECO:0007669"/>
    <property type="project" value="Ensembl"/>
</dbReference>
<dbReference type="GO" id="GO:0035545">
    <property type="term" value="P:determination of left/right asymmetry in nervous system"/>
    <property type="evidence" value="ECO:0000315"/>
    <property type="project" value="UniProtKB"/>
</dbReference>
<dbReference type="GO" id="GO:0007368">
    <property type="term" value="P:determination of left/right symmetry"/>
    <property type="evidence" value="ECO:0000315"/>
    <property type="project" value="MGI"/>
</dbReference>
<dbReference type="GO" id="GO:0071910">
    <property type="term" value="P:determination of liver left/right asymmetry"/>
    <property type="evidence" value="ECO:0007669"/>
    <property type="project" value="Ensembl"/>
</dbReference>
<dbReference type="GO" id="GO:0035469">
    <property type="term" value="P:determination of pancreatic left/right asymmetry"/>
    <property type="evidence" value="ECO:0007669"/>
    <property type="project" value="Ensembl"/>
</dbReference>
<dbReference type="GO" id="GO:0009880">
    <property type="term" value="P:embryonic pattern specification"/>
    <property type="evidence" value="ECO:0000315"/>
    <property type="project" value="MGI"/>
</dbReference>
<dbReference type="GO" id="GO:0060324">
    <property type="term" value="P:face development"/>
    <property type="evidence" value="ECO:0000315"/>
    <property type="project" value="MGI"/>
</dbReference>
<dbReference type="GO" id="GO:0030900">
    <property type="term" value="P:forebrain development"/>
    <property type="evidence" value="ECO:0000316"/>
    <property type="project" value="MGI"/>
</dbReference>
<dbReference type="GO" id="GO:0007369">
    <property type="term" value="P:gastrulation"/>
    <property type="evidence" value="ECO:0000315"/>
    <property type="project" value="MGI"/>
</dbReference>
<dbReference type="GO" id="GO:0010467">
    <property type="term" value="P:gene expression"/>
    <property type="evidence" value="ECO:0000315"/>
    <property type="project" value="MGI"/>
</dbReference>
<dbReference type="GO" id="GO:0030718">
    <property type="term" value="P:germ-line stem cell population maintenance"/>
    <property type="evidence" value="ECO:0000315"/>
    <property type="project" value="MGI"/>
</dbReference>
<dbReference type="GO" id="GO:0007507">
    <property type="term" value="P:heart development"/>
    <property type="evidence" value="ECO:0000315"/>
    <property type="project" value="MGI"/>
</dbReference>
<dbReference type="GO" id="GO:0001947">
    <property type="term" value="P:heart looping"/>
    <property type="evidence" value="ECO:0000315"/>
    <property type="project" value="MGI"/>
</dbReference>
<dbReference type="GO" id="GO:0021766">
    <property type="term" value="P:hippocampus development"/>
    <property type="evidence" value="ECO:0000316"/>
    <property type="project" value="MGI"/>
</dbReference>
<dbReference type="GO" id="GO:0070986">
    <property type="term" value="P:left/right axis specification"/>
    <property type="evidence" value="ECO:0000315"/>
    <property type="project" value="MGI"/>
</dbReference>
<dbReference type="GO" id="GO:0060972">
    <property type="term" value="P:left/right pattern formation"/>
    <property type="evidence" value="ECO:0000315"/>
    <property type="project" value="MGI"/>
</dbReference>
<dbReference type="GO" id="GO:0035108">
    <property type="term" value="P:limb morphogenesis"/>
    <property type="evidence" value="ECO:0000316"/>
    <property type="project" value="MGI"/>
</dbReference>
<dbReference type="GO" id="GO:0030324">
    <property type="term" value="P:lung development"/>
    <property type="evidence" value="ECO:0007669"/>
    <property type="project" value="Ensembl"/>
</dbReference>
<dbReference type="GO" id="GO:0098727">
    <property type="term" value="P:maintenance of cell number"/>
    <property type="evidence" value="ECO:0000316"/>
    <property type="project" value="MGI"/>
</dbReference>
<dbReference type="GO" id="GO:0007498">
    <property type="term" value="P:mesoderm development"/>
    <property type="evidence" value="ECO:0000315"/>
    <property type="project" value="MGI"/>
</dbReference>
<dbReference type="GO" id="GO:0042789">
    <property type="term" value="P:mRNA transcription by RNA polymerase II"/>
    <property type="evidence" value="ECO:0000315"/>
    <property type="project" value="MGI"/>
</dbReference>
<dbReference type="GO" id="GO:0001840">
    <property type="term" value="P:neural plate development"/>
    <property type="evidence" value="ECO:0000316"/>
    <property type="project" value="MGI"/>
</dbReference>
<dbReference type="GO" id="GO:0030182">
    <property type="term" value="P:neuron differentiation"/>
    <property type="evidence" value="ECO:0000315"/>
    <property type="project" value="MGI"/>
</dbReference>
<dbReference type="GO" id="GO:0021772">
    <property type="term" value="P:olfactory bulb development"/>
    <property type="evidence" value="ECO:0000314"/>
    <property type="project" value="MGI"/>
</dbReference>
<dbReference type="GO" id="GO:0042473">
    <property type="term" value="P:outer ear morphogenesis"/>
    <property type="evidence" value="ECO:0000315"/>
    <property type="project" value="MGI"/>
</dbReference>
<dbReference type="GO" id="GO:0048339">
    <property type="term" value="P:paraxial mesoderm development"/>
    <property type="evidence" value="ECO:0000316"/>
    <property type="project" value="MGI"/>
</dbReference>
<dbReference type="GO" id="GO:0007389">
    <property type="term" value="P:pattern specification process"/>
    <property type="evidence" value="ECO:0000315"/>
    <property type="project" value="MGI"/>
</dbReference>
<dbReference type="GO" id="GO:0045893">
    <property type="term" value="P:positive regulation of DNA-templated transcription"/>
    <property type="evidence" value="ECO:0000314"/>
    <property type="project" value="UniProtKB"/>
</dbReference>
<dbReference type="GO" id="GO:0045944">
    <property type="term" value="P:positive regulation of transcription by RNA polymerase II"/>
    <property type="evidence" value="ECO:0000314"/>
    <property type="project" value="NTNU_SB"/>
</dbReference>
<dbReference type="GO" id="GO:0090009">
    <property type="term" value="P:primitive streak formation"/>
    <property type="evidence" value="ECO:0000315"/>
    <property type="project" value="MGI"/>
</dbReference>
<dbReference type="GO" id="GO:0001501">
    <property type="term" value="P:skeletal system development"/>
    <property type="evidence" value="ECO:0000315"/>
    <property type="project" value="MGI"/>
</dbReference>
<dbReference type="GO" id="GO:0007224">
    <property type="term" value="P:smoothened signaling pathway"/>
    <property type="evidence" value="ECO:0000316"/>
    <property type="project" value="MGI"/>
</dbReference>
<dbReference type="GO" id="GO:0048863">
    <property type="term" value="P:stem cell differentiation"/>
    <property type="evidence" value="ECO:0000314"/>
    <property type="project" value="MGI"/>
</dbReference>
<dbReference type="GO" id="GO:0019827">
    <property type="term" value="P:stem cell population maintenance"/>
    <property type="evidence" value="ECO:0000315"/>
    <property type="project" value="MGI"/>
</dbReference>
<dbReference type="FunFam" id="3.30.160.60:FF:000035">
    <property type="entry name" value="Zinc finger protein ZIC 1"/>
    <property type="match status" value="1"/>
</dbReference>
<dbReference type="FunFam" id="3.30.160.60:FF:000039">
    <property type="entry name" value="Zinc finger protein ZIC 1"/>
    <property type="match status" value="1"/>
</dbReference>
<dbReference type="FunFam" id="3.30.160.60:FF:000041">
    <property type="entry name" value="Zinc finger protein ZIC 1"/>
    <property type="match status" value="1"/>
</dbReference>
<dbReference type="FunFam" id="3.30.160.60:FF:001330">
    <property type="entry name" value="Zinc finger protein ZIC 4"/>
    <property type="match status" value="1"/>
</dbReference>
<dbReference type="Gene3D" id="3.30.160.60">
    <property type="entry name" value="Classic Zinc Finger"/>
    <property type="match status" value="4"/>
</dbReference>
<dbReference type="InterPro" id="IPR043359">
    <property type="entry name" value="GLI-like"/>
</dbReference>
<dbReference type="InterPro" id="IPR056436">
    <property type="entry name" value="Znf-C2H2_ZIC1-5/GLI1-3-like"/>
</dbReference>
<dbReference type="InterPro" id="IPR036236">
    <property type="entry name" value="Znf_C2H2_sf"/>
</dbReference>
<dbReference type="InterPro" id="IPR013087">
    <property type="entry name" value="Znf_C2H2_type"/>
</dbReference>
<dbReference type="InterPro" id="IPR041643">
    <property type="entry name" value="Znf_ZIC"/>
</dbReference>
<dbReference type="PANTHER" id="PTHR45718">
    <property type="entry name" value="TRANSCRIPTIONAL ACTIVATOR CUBITUS INTERRUPTUS"/>
    <property type="match status" value="1"/>
</dbReference>
<dbReference type="PANTHER" id="PTHR45718:SF4">
    <property type="entry name" value="TRANSCRIPTIONAL ACTIVATOR CUBITUS INTERRUPTUS"/>
    <property type="match status" value="1"/>
</dbReference>
<dbReference type="Pfam" id="PF00096">
    <property type="entry name" value="zf-C2H2"/>
    <property type="match status" value="3"/>
</dbReference>
<dbReference type="Pfam" id="PF23561">
    <property type="entry name" value="zf-C2H2_15"/>
    <property type="match status" value="1"/>
</dbReference>
<dbReference type="Pfam" id="PF18366">
    <property type="entry name" value="zf_ZIC"/>
    <property type="match status" value="1"/>
</dbReference>
<dbReference type="SMART" id="SM00355">
    <property type="entry name" value="ZnF_C2H2"/>
    <property type="match status" value="5"/>
</dbReference>
<dbReference type="SUPFAM" id="SSF57667">
    <property type="entry name" value="beta-beta-alpha zinc fingers"/>
    <property type="match status" value="2"/>
</dbReference>
<dbReference type="PROSITE" id="PS00028">
    <property type="entry name" value="ZINC_FINGER_C2H2_1"/>
    <property type="match status" value="3"/>
</dbReference>
<dbReference type="PROSITE" id="PS50157">
    <property type="entry name" value="ZINC_FINGER_C2H2_2"/>
    <property type="match status" value="4"/>
</dbReference>
<gene>
    <name type="primary">Zic3</name>
</gene>